<organism>
    <name type="scientific">Chlamydia muridarum (strain MoPn / Nigg)</name>
    <dbReference type="NCBI Taxonomy" id="243161"/>
    <lineage>
        <taxon>Bacteria</taxon>
        <taxon>Pseudomonadati</taxon>
        <taxon>Chlamydiota</taxon>
        <taxon>Chlamydiia</taxon>
        <taxon>Chlamydiales</taxon>
        <taxon>Chlamydiaceae</taxon>
        <taxon>Chlamydia/Chlamydophila group</taxon>
        <taxon>Chlamydia</taxon>
    </lineage>
</organism>
<sequence length="236" mass="26329">MTKQLILENVSFRYGKTGPWIVDHVSCEVHSGDFIGIIGPNGGGKTTLTQLMLGLLQPVCGKIFTCFTQENRPLSIGWVPQHFAYDAAFPITVKETVLSGRLATLPWYGRYTKKDHDAAEEALHTVDLLEYKDSCFSHLSGGQIQRVLLARALSARPKFLLLDEPTANIDPSNQQKILQILSDLNKHCTILMITHDLHHTAGCFNRVFFMNKKLTALADTTTISERFCCNTFGKCS</sequence>
<proteinExistence type="inferred from homology"/>
<evidence type="ECO:0000255" key="1">
    <source>
        <dbReference type="PROSITE-ProRule" id="PRU00434"/>
    </source>
</evidence>
<evidence type="ECO:0000305" key="2"/>
<gene>
    <name type="ordered locus">TC_0697</name>
</gene>
<feature type="chain" id="PRO_0000093232" description="Probable metal transport system ATP-binding protein TC_0697">
    <location>
        <begin position="1"/>
        <end position="236"/>
    </location>
</feature>
<feature type="domain" description="ABC transporter" evidence="1">
    <location>
        <begin position="5"/>
        <end position="236"/>
    </location>
</feature>
<feature type="binding site" evidence="1">
    <location>
        <begin position="39"/>
        <end position="46"/>
    </location>
    <ligand>
        <name>ATP</name>
        <dbReference type="ChEBI" id="CHEBI:30616"/>
    </ligand>
</feature>
<name>Y697_CHLMU</name>
<accession>Q9PJX9</accession>
<reference key="1">
    <citation type="journal article" date="2000" name="Nucleic Acids Res.">
        <title>Genome sequences of Chlamydia trachomatis MoPn and Chlamydia pneumoniae AR39.</title>
        <authorList>
            <person name="Read T.D."/>
            <person name="Brunham R.C."/>
            <person name="Shen C."/>
            <person name="Gill S.R."/>
            <person name="Heidelberg J.F."/>
            <person name="White O."/>
            <person name="Hickey E.K."/>
            <person name="Peterson J.D."/>
            <person name="Utterback T.R."/>
            <person name="Berry K.J."/>
            <person name="Bass S."/>
            <person name="Linher K.D."/>
            <person name="Weidman J.F."/>
            <person name="Khouri H.M."/>
            <person name="Craven B."/>
            <person name="Bowman C."/>
            <person name="Dodson R.J."/>
            <person name="Gwinn M.L."/>
            <person name="Nelson W.C."/>
            <person name="DeBoy R.T."/>
            <person name="Kolonay J.F."/>
            <person name="McClarty G."/>
            <person name="Salzberg S.L."/>
            <person name="Eisen J.A."/>
            <person name="Fraser C.M."/>
        </authorList>
    </citation>
    <scope>NUCLEOTIDE SEQUENCE [LARGE SCALE GENOMIC DNA]</scope>
    <source>
        <strain>MoPn / Nigg</strain>
    </source>
</reference>
<protein>
    <recommendedName>
        <fullName>Probable metal transport system ATP-binding protein TC_0697</fullName>
    </recommendedName>
</protein>
<comment type="function">
    <text>Part of an ATP-driven transport system TC_0696/TC_0697/TC_0698 for a metal. Probably responsible for energy coupling to the transport system.</text>
</comment>
<comment type="subcellular location">
    <subcellularLocation>
        <location evidence="2">Cell inner membrane</location>
        <topology evidence="2">Peripheral membrane protein</topology>
    </subcellularLocation>
</comment>
<comment type="similarity">
    <text evidence="2">Belongs to the ABC transporter superfamily.</text>
</comment>
<keyword id="KW-0067">ATP-binding</keyword>
<keyword id="KW-0997">Cell inner membrane</keyword>
<keyword id="KW-1003">Cell membrane</keyword>
<keyword id="KW-0472">Membrane</keyword>
<keyword id="KW-0547">Nucleotide-binding</keyword>
<keyword id="KW-0813">Transport</keyword>
<dbReference type="EMBL" id="AE002160">
    <property type="protein sequence ID" value="AAF73593.1"/>
    <property type="molecule type" value="Genomic_DNA"/>
</dbReference>
<dbReference type="RefSeq" id="WP_010231251.1">
    <property type="nucleotide sequence ID" value="NZ_CP063055.1"/>
</dbReference>
<dbReference type="SMR" id="Q9PJX9"/>
<dbReference type="GeneID" id="1246059"/>
<dbReference type="KEGG" id="cmu:TC_0697"/>
<dbReference type="eggNOG" id="COG1121">
    <property type="taxonomic scope" value="Bacteria"/>
</dbReference>
<dbReference type="HOGENOM" id="CLU_000604_1_11_0"/>
<dbReference type="OrthoDB" id="9806726at2"/>
<dbReference type="Proteomes" id="UP000000800">
    <property type="component" value="Chromosome"/>
</dbReference>
<dbReference type="GO" id="GO:0005886">
    <property type="term" value="C:plasma membrane"/>
    <property type="evidence" value="ECO:0007669"/>
    <property type="project" value="UniProtKB-SubCell"/>
</dbReference>
<dbReference type="GO" id="GO:0005524">
    <property type="term" value="F:ATP binding"/>
    <property type="evidence" value="ECO:0007669"/>
    <property type="project" value="UniProtKB-KW"/>
</dbReference>
<dbReference type="GO" id="GO:0016887">
    <property type="term" value="F:ATP hydrolysis activity"/>
    <property type="evidence" value="ECO:0007669"/>
    <property type="project" value="InterPro"/>
</dbReference>
<dbReference type="Gene3D" id="3.40.50.300">
    <property type="entry name" value="P-loop containing nucleotide triphosphate hydrolases"/>
    <property type="match status" value="1"/>
</dbReference>
<dbReference type="InterPro" id="IPR003593">
    <property type="entry name" value="AAA+_ATPase"/>
</dbReference>
<dbReference type="InterPro" id="IPR003439">
    <property type="entry name" value="ABC_transporter-like_ATP-bd"/>
</dbReference>
<dbReference type="InterPro" id="IPR017871">
    <property type="entry name" value="ABC_transporter-like_CS"/>
</dbReference>
<dbReference type="InterPro" id="IPR050153">
    <property type="entry name" value="Metal_Ion_Import_ABC"/>
</dbReference>
<dbReference type="InterPro" id="IPR027417">
    <property type="entry name" value="P-loop_NTPase"/>
</dbReference>
<dbReference type="PANTHER" id="PTHR42734">
    <property type="entry name" value="METAL TRANSPORT SYSTEM ATP-BINDING PROTEIN TM_0124-RELATED"/>
    <property type="match status" value="1"/>
</dbReference>
<dbReference type="PANTHER" id="PTHR42734:SF17">
    <property type="entry name" value="METAL TRANSPORT SYSTEM ATP-BINDING PROTEIN TM_0124-RELATED"/>
    <property type="match status" value="1"/>
</dbReference>
<dbReference type="Pfam" id="PF00005">
    <property type="entry name" value="ABC_tran"/>
    <property type="match status" value="1"/>
</dbReference>
<dbReference type="SMART" id="SM00382">
    <property type="entry name" value="AAA"/>
    <property type="match status" value="1"/>
</dbReference>
<dbReference type="SUPFAM" id="SSF52540">
    <property type="entry name" value="P-loop containing nucleoside triphosphate hydrolases"/>
    <property type="match status" value="1"/>
</dbReference>
<dbReference type="PROSITE" id="PS00211">
    <property type="entry name" value="ABC_TRANSPORTER_1"/>
    <property type="match status" value="1"/>
</dbReference>
<dbReference type="PROSITE" id="PS50893">
    <property type="entry name" value="ABC_TRANSPORTER_2"/>
    <property type="match status" value="1"/>
</dbReference>